<comment type="function">
    <text evidence="1">Protein S19 forms a complex with S13 that binds strongly to the 16S ribosomal RNA.</text>
</comment>
<comment type="similarity">
    <text evidence="1">Belongs to the universal ribosomal protein uS19 family.</text>
</comment>
<name>RS19_YERPA</name>
<keyword id="KW-0687">Ribonucleoprotein</keyword>
<keyword id="KW-0689">Ribosomal protein</keyword>
<keyword id="KW-0694">RNA-binding</keyword>
<keyword id="KW-0699">rRNA-binding</keyword>
<sequence length="92" mass="10430">MPRSLKKGPFIDLHLLKKVEKAVESGDKKPIRTWSRRSTVFPNMIGLTIAVHNGRQHVPVFVSDEMVGHKLGEFAPTRTYRGHAADKKAKKR</sequence>
<accession>Q1C2V1</accession>
<organism>
    <name type="scientific">Yersinia pestis bv. Antiqua (strain Antiqua)</name>
    <dbReference type="NCBI Taxonomy" id="360102"/>
    <lineage>
        <taxon>Bacteria</taxon>
        <taxon>Pseudomonadati</taxon>
        <taxon>Pseudomonadota</taxon>
        <taxon>Gammaproteobacteria</taxon>
        <taxon>Enterobacterales</taxon>
        <taxon>Yersiniaceae</taxon>
        <taxon>Yersinia</taxon>
    </lineage>
</organism>
<proteinExistence type="inferred from homology"/>
<protein>
    <recommendedName>
        <fullName evidence="1">Small ribosomal subunit protein uS19</fullName>
    </recommendedName>
    <alternativeName>
        <fullName evidence="2">30S ribosomal protein S19</fullName>
    </alternativeName>
</protein>
<feature type="chain" id="PRO_0000265467" description="Small ribosomal subunit protein uS19">
    <location>
        <begin position="1"/>
        <end position="92"/>
    </location>
</feature>
<gene>
    <name evidence="1" type="primary">rpsS</name>
    <name type="ordered locus">YPA_3259</name>
</gene>
<reference key="1">
    <citation type="journal article" date="2006" name="J. Bacteriol.">
        <title>Complete genome sequence of Yersinia pestis strains Antiqua and Nepal516: evidence of gene reduction in an emerging pathogen.</title>
        <authorList>
            <person name="Chain P.S.G."/>
            <person name="Hu P."/>
            <person name="Malfatti S.A."/>
            <person name="Radnedge L."/>
            <person name="Larimer F."/>
            <person name="Vergez L.M."/>
            <person name="Worsham P."/>
            <person name="Chu M.C."/>
            <person name="Andersen G.L."/>
        </authorList>
    </citation>
    <scope>NUCLEOTIDE SEQUENCE [LARGE SCALE GENOMIC DNA]</scope>
    <source>
        <strain>Antiqua</strain>
    </source>
</reference>
<dbReference type="EMBL" id="CP000308">
    <property type="protein sequence ID" value="ABG15221.1"/>
    <property type="molecule type" value="Genomic_DNA"/>
</dbReference>
<dbReference type="RefSeq" id="WP_002213430.1">
    <property type="nucleotide sequence ID" value="NZ_CP009906.1"/>
</dbReference>
<dbReference type="SMR" id="Q1C2V1"/>
<dbReference type="GeneID" id="97454235"/>
<dbReference type="KEGG" id="ypa:YPA_3259"/>
<dbReference type="Proteomes" id="UP000001971">
    <property type="component" value="Chromosome"/>
</dbReference>
<dbReference type="GO" id="GO:0005737">
    <property type="term" value="C:cytoplasm"/>
    <property type="evidence" value="ECO:0007669"/>
    <property type="project" value="UniProtKB-ARBA"/>
</dbReference>
<dbReference type="GO" id="GO:0015935">
    <property type="term" value="C:small ribosomal subunit"/>
    <property type="evidence" value="ECO:0007669"/>
    <property type="project" value="InterPro"/>
</dbReference>
<dbReference type="GO" id="GO:0019843">
    <property type="term" value="F:rRNA binding"/>
    <property type="evidence" value="ECO:0007669"/>
    <property type="project" value="UniProtKB-UniRule"/>
</dbReference>
<dbReference type="GO" id="GO:0003735">
    <property type="term" value="F:structural constituent of ribosome"/>
    <property type="evidence" value="ECO:0007669"/>
    <property type="project" value="InterPro"/>
</dbReference>
<dbReference type="GO" id="GO:0000028">
    <property type="term" value="P:ribosomal small subunit assembly"/>
    <property type="evidence" value="ECO:0007669"/>
    <property type="project" value="TreeGrafter"/>
</dbReference>
<dbReference type="GO" id="GO:0006412">
    <property type="term" value="P:translation"/>
    <property type="evidence" value="ECO:0007669"/>
    <property type="project" value="UniProtKB-UniRule"/>
</dbReference>
<dbReference type="FunFam" id="3.30.860.10:FF:000001">
    <property type="entry name" value="30S ribosomal protein S19"/>
    <property type="match status" value="1"/>
</dbReference>
<dbReference type="Gene3D" id="3.30.860.10">
    <property type="entry name" value="30s Ribosomal Protein S19, Chain A"/>
    <property type="match status" value="1"/>
</dbReference>
<dbReference type="HAMAP" id="MF_00531">
    <property type="entry name" value="Ribosomal_uS19"/>
    <property type="match status" value="1"/>
</dbReference>
<dbReference type="InterPro" id="IPR002222">
    <property type="entry name" value="Ribosomal_uS19"/>
</dbReference>
<dbReference type="InterPro" id="IPR005732">
    <property type="entry name" value="Ribosomal_uS19_bac-type"/>
</dbReference>
<dbReference type="InterPro" id="IPR020934">
    <property type="entry name" value="Ribosomal_uS19_CS"/>
</dbReference>
<dbReference type="InterPro" id="IPR023575">
    <property type="entry name" value="Ribosomal_uS19_SF"/>
</dbReference>
<dbReference type="NCBIfam" id="TIGR01050">
    <property type="entry name" value="rpsS_bact"/>
    <property type="match status" value="1"/>
</dbReference>
<dbReference type="PANTHER" id="PTHR11880">
    <property type="entry name" value="RIBOSOMAL PROTEIN S19P FAMILY MEMBER"/>
    <property type="match status" value="1"/>
</dbReference>
<dbReference type="PANTHER" id="PTHR11880:SF8">
    <property type="entry name" value="SMALL RIBOSOMAL SUBUNIT PROTEIN US19M"/>
    <property type="match status" value="1"/>
</dbReference>
<dbReference type="Pfam" id="PF00203">
    <property type="entry name" value="Ribosomal_S19"/>
    <property type="match status" value="1"/>
</dbReference>
<dbReference type="PIRSF" id="PIRSF002144">
    <property type="entry name" value="Ribosomal_S19"/>
    <property type="match status" value="1"/>
</dbReference>
<dbReference type="PRINTS" id="PR00975">
    <property type="entry name" value="RIBOSOMALS19"/>
</dbReference>
<dbReference type="SUPFAM" id="SSF54570">
    <property type="entry name" value="Ribosomal protein S19"/>
    <property type="match status" value="1"/>
</dbReference>
<dbReference type="PROSITE" id="PS00323">
    <property type="entry name" value="RIBOSOMAL_S19"/>
    <property type="match status" value="1"/>
</dbReference>
<evidence type="ECO:0000255" key="1">
    <source>
        <dbReference type="HAMAP-Rule" id="MF_00531"/>
    </source>
</evidence>
<evidence type="ECO:0000305" key="2"/>